<proteinExistence type="inferred from homology"/>
<sequence>MQPVFSRFPYASKSGFISLASRGYAVSRNSGSSIKSNLRSKPRADTRWNTKAKPPVKNRKSNGKGDHRSHSRSDSRAKPSQEQTQQQFQYGEYGKLSEGDPKILERSKRLVSKINDFSQLKILPEVRDKLMEVISSESLLNKNLLDVKYNPKENNVQEFKKHLKPSPIQTTAIYQTSKTLMDPQLQVRLIAAETGSGKTMAYLIPLVDYLKRTEMENPSWETLKDKAIVRSIILLPTHELVEQVYQTVSKLEPALGMHTYKWDAGSSYKGFVEALKGRIDIMVTTPGKILSLFNISMVNRPDRILSQVKFLVMDEADTLLDKSWVEDSYSTIKHMQNLNHVLFCSATIPKEFQKTITRLFPTVGVIASPNLHKINHKNQIKLINADMAPYKGSKTKALAQILYSINRDNIDPGFEKRVVIFVNEKENVPLVATKLANQYGHDVVALTGNDSVEERLEKIKPFMDPPKKMTTRKSEKVTTENTVTMKIPNSNIVIEEIPEDNEAFVESTLKVLVTTDVLARGINFRGCRYVVLYDIPNTPVDLVHRVGRTGRMNQKGSVFIITGKRVKNWVKAIPSIVSKNVSIS</sequence>
<dbReference type="EC" id="3.6.4.13"/>
<dbReference type="EMBL" id="CR382122">
    <property type="protein sequence ID" value="CAH02027.1"/>
    <property type="molecule type" value="Genomic_DNA"/>
</dbReference>
<dbReference type="RefSeq" id="XP_451634.1">
    <property type="nucleotide sequence ID" value="XM_451634.1"/>
</dbReference>
<dbReference type="SMR" id="Q6CWQ5"/>
<dbReference type="FunCoup" id="Q6CWQ5">
    <property type="interactions" value="162"/>
</dbReference>
<dbReference type="STRING" id="284590.Q6CWQ5"/>
<dbReference type="PaxDb" id="284590-Q6CWQ5"/>
<dbReference type="KEGG" id="kla:KLLA0_B02310g"/>
<dbReference type="eggNOG" id="KOG0335">
    <property type="taxonomic scope" value="Eukaryota"/>
</dbReference>
<dbReference type="HOGENOM" id="CLU_003041_18_0_1"/>
<dbReference type="InParanoid" id="Q6CWQ5"/>
<dbReference type="OMA" id="HSTIDFI"/>
<dbReference type="Proteomes" id="UP000000598">
    <property type="component" value="Chromosome B"/>
</dbReference>
<dbReference type="GO" id="GO:0005739">
    <property type="term" value="C:mitochondrion"/>
    <property type="evidence" value="ECO:0007669"/>
    <property type="project" value="UniProtKB-SubCell"/>
</dbReference>
<dbReference type="GO" id="GO:0005524">
    <property type="term" value="F:ATP binding"/>
    <property type="evidence" value="ECO:0007669"/>
    <property type="project" value="UniProtKB-KW"/>
</dbReference>
<dbReference type="GO" id="GO:0016887">
    <property type="term" value="F:ATP hydrolysis activity"/>
    <property type="evidence" value="ECO:0007669"/>
    <property type="project" value="RHEA"/>
</dbReference>
<dbReference type="GO" id="GO:0003723">
    <property type="term" value="F:RNA binding"/>
    <property type="evidence" value="ECO:0007669"/>
    <property type="project" value="UniProtKB-KW"/>
</dbReference>
<dbReference type="GO" id="GO:0003724">
    <property type="term" value="F:RNA helicase activity"/>
    <property type="evidence" value="ECO:0007669"/>
    <property type="project" value="UniProtKB-EC"/>
</dbReference>
<dbReference type="CDD" id="cd18787">
    <property type="entry name" value="SF2_C_DEAD"/>
    <property type="match status" value="1"/>
</dbReference>
<dbReference type="Gene3D" id="3.40.50.300">
    <property type="entry name" value="P-loop containing nucleotide triphosphate hydrolases"/>
    <property type="match status" value="2"/>
</dbReference>
<dbReference type="InterPro" id="IPR011545">
    <property type="entry name" value="DEAD/DEAH_box_helicase_dom"/>
</dbReference>
<dbReference type="InterPro" id="IPR014001">
    <property type="entry name" value="Helicase_ATP-bd"/>
</dbReference>
<dbReference type="InterPro" id="IPR001650">
    <property type="entry name" value="Helicase_C-like"/>
</dbReference>
<dbReference type="InterPro" id="IPR027417">
    <property type="entry name" value="P-loop_NTPase"/>
</dbReference>
<dbReference type="PANTHER" id="PTHR47960">
    <property type="entry name" value="DEAD-BOX ATP-DEPENDENT RNA HELICASE 50"/>
    <property type="match status" value="1"/>
</dbReference>
<dbReference type="Pfam" id="PF00270">
    <property type="entry name" value="DEAD"/>
    <property type="match status" value="1"/>
</dbReference>
<dbReference type="Pfam" id="PF00271">
    <property type="entry name" value="Helicase_C"/>
    <property type="match status" value="1"/>
</dbReference>
<dbReference type="SMART" id="SM00487">
    <property type="entry name" value="DEXDc"/>
    <property type="match status" value="1"/>
</dbReference>
<dbReference type="SMART" id="SM00490">
    <property type="entry name" value="HELICc"/>
    <property type="match status" value="1"/>
</dbReference>
<dbReference type="SUPFAM" id="SSF52540">
    <property type="entry name" value="P-loop containing nucleoside triphosphate hydrolases"/>
    <property type="match status" value="1"/>
</dbReference>
<dbReference type="PROSITE" id="PS51192">
    <property type="entry name" value="HELICASE_ATP_BIND_1"/>
    <property type="match status" value="1"/>
</dbReference>
<dbReference type="PROSITE" id="PS51194">
    <property type="entry name" value="HELICASE_CTER"/>
    <property type="match status" value="1"/>
</dbReference>
<feature type="transit peptide" description="Mitochondrion" evidence="2">
    <location>
        <begin position="1"/>
        <end position="49"/>
    </location>
</feature>
<feature type="chain" id="PRO_0000232354" description="ATP-dependent RNA helicase MRH4, mitochondrial">
    <location>
        <begin position="50"/>
        <end position="584"/>
    </location>
</feature>
<feature type="domain" description="Helicase ATP-binding" evidence="3">
    <location>
        <begin position="179"/>
        <end position="366"/>
    </location>
</feature>
<feature type="domain" description="Helicase C-terminal" evidence="4">
    <location>
        <begin position="397"/>
        <end position="584"/>
    </location>
</feature>
<feature type="region of interest" description="Disordered" evidence="5">
    <location>
        <begin position="28"/>
        <end position="92"/>
    </location>
</feature>
<feature type="short sequence motif" description="Q motif">
    <location>
        <begin position="162"/>
        <end position="169"/>
    </location>
</feature>
<feature type="short sequence motif" description="DEAD box">
    <location>
        <begin position="314"/>
        <end position="317"/>
    </location>
</feature>
<feature type="compositionally biased region" description="Polar residues" evidence="5">
    <location>
        <begin position="28"/>
        <end position="39"/>
    </location>
</feature>
<feature type="compositionally biased region" description="Basic and acidic residues" evidence="5">
    <location>
        <begin position="63"/>
        <end position="79"/>
    </location>
</feature>
<feature type="binding site" evidence="3">
    <location>
        <begin position="192"/>
        <end position="199"/>
    </location>
    <ligand>
        <name>ATP</name>
        <dbReference type="ChEBI" id="CHEBI:30616"/>
    </ligand>
</feature>
<keyword id="KW-0067">ATP-binding</keyword>
<keyword id="KW-0347">Helicase</keyword>
<keyword id="KW-0378">Hydrolase</keyword>
<keyword id="KW-0496">Mitochondrion</keyword>
<keyword id="KW-0547">Nucleotide-binding</keyword>
<keyword id="KW-1185">Reference proteome</keyword>
<keyword id="KW-0694">RNA-binding</keyword>
<keyword id="KW-0809">Transit peptide</keyword>
<organism>
    <name type="scientific">Kluyveromyces lactis (strain ATCC 8585 / CBS 2359 / DSM 70799 / NBRC 1267 / NRRL Y-1140 / WM37)</name>
    <name type="common">Yeast</name>
    <name type="synonym">Candida sphaerica</name>
    <dbReference type="NCBI Taxonomy" id="284590"/>
    <lineage>
        <taxon>Eukaryota</taxon>
        <taxon>Fungi</taxon>
        <taxon>Dikarya</taxon>
        <taxon>Ascomycota</taxon>
        <taxon>Saccharomycotina</taxon>
        <taxon>Saccharomycetes</taxon>
        <taxon>Saccharomycetales</taxon>
        <taxon>Saccharomycetaceae</taxon>
        <taxon>Kluyveromyces</taxon>
    </lineage>
</organism>
<protein>
    <recommendedName>
        <fullName>ATP-dependent RNA helicase MRH4, mitochondrial</fullName>
        <ecNumber>3.6.4.13</ecNumber>
    </recommendedName>
</protein>
<evidence type="ECO:0000250" key="1"/>
<evidence type="ECO:0000255" key="2"/>
<evidence type="ECO:0000255" key="3">
    <source>
        <dbReference type="PROSITE-ProRule" id="PRU00541"/>
    </source>
</evidence>
<evidence type="ECO:0000255" key="4">
    <source>
        <dbReference type="PROSITE-ProRule" id="PRU00542"/>
    </source>
</evidence>
<evidence type="ECO:0000256" key="5">
    <source>
        <dbReference type="SAM" id="MobiDB-lite"/>
    </source>
</evidence>
<evidence type="ECO:0000305" key="6"/>
<comment type="function">
    <text evidence="1">ATP-binding RNA helicase involved in mitochondrial RNA metabolism. Required for maintenance of mitochondrial DNA (By similarity).</text>
</comment>
<comment type="catalytic activity">
    <reaction>
        <text>ATP + H2O = ADP + phosphate + H(+)</text>
        <dbReference type="Rhea" id="RHEA:13065"/>
        <dbReference type="ChEBI" id="CHEBI:15377"/>
        <dbReference type="ChEBI" id="CHEBI:15378"/>
        <dbReference type="ChEBI" id="CHEBI:30616"/>
        <dbReference type="ChEBI" id="CHEBI:43474"/>
        <dbReference type="ChEBI" id="CHEBI:456216"/>
        <dbReference type="EC" id="3.6.4.13"/>
    </reaction>
</comment>
<comment type="subcellular location">
    <subcellularLocation>
        <location evidence="1">Mitochondrion</location>
    </subcellularLocation>
</comment>
<comment type="domain">
    <text>The Q motif is unique to and characteristic of the DEAD box family of RNA helicases and controls ATP binding and hydrolysis.</text>
</comment>
<comment type="similarity">
    <text evidence="6">Belongs to the DEAD box helicase family. MRH4 subfamily.</text>
</comment>
<gene>
    <name type="primary">MRH4</name>
    <name type="ordered locus">KLLA0B02310g</name>
</gene>
<accession>Q6CWQ5</accession>
<reference key="1">
    <citation type="journal article" date="2004" name="Nature">
        <title>Genome evolution in yeasts.</title>
        <authorList>
            <person name="Dujon B."/>
            <person name="Sherman D."/>
            <person name="Fischer G."/>
            <person name="Durrens P."/>
            <person name="Casaregola S."/>
            <person name="Lafontaine I."/>
            <person name="de Montigny J."/>
            <person name="Marck C."/>
            <person name="Neuveglise C."/>
            <person name="Talla E."/>
            <person name="Goffard N."/>
            <person name="Frangeul L."/>
            <person name="Aigle M."/>
            <person name="Anthouard V."/>
            <person name="Babour A."/>
            <person name="Barbe V."/>
            <person name="Barnay S."/>
            <person name="Blanchin S."/>
            <person name="Beckerich J.-M."/>
            <person name="Beyne E."/>
            <person name="Bleykasten C."/>
            <person name="Boisrame A."/>
            <person name="Boyer J."/>
            <person name="Cattolico L."/>
            <person name="Confanioleri F."/>
            <person name="de Daruvar A."/>
            <person name="Despons L."/>
            <person name="Fabre E."/>
            <person name="Fairhead C."/>
            <person name="Ferry-Dumazet H."/>
            <person name="Groppi A."/>
            <person name="Hantraye F."/>
            <person name="Hennequin C."/>
            <person name="Jauniaux N."/>
            <person name="Joyet P."/>
            <person name="Kachouri R."/>
            <person name="Kerrest A."/>
            <person name="Koszul R."/>
            <person name="Lemaire M."/>
            <person name="Lesur I."/>
            <person name="Ma L."/>
            <person name="Muller H."/>
            <person name="Nicaud J.-M."/>
            <person name="Nikolski M."/>
            <person name="Oztas S."/>
            <person name="Ozier-Kalogeropoulos O."/>
            <person name="Pellenz S."/>
            <person name="Potier S."/>
            <person name="Richard G.-F."/>
            <person name="Straub M.-L."/>
            <person name="Suleau A."/>
            <person name="Swennen D."/>
            <person name="Tekaia F."/>
            <person name="Wesolowski-Louvel M."/>
            <person name="Westhof E."/>
            <person name="Wirth B."/>
            <person name="Zeniou-Meyer M."/>
            <person name="Zivanovic Y."/>
            <person name="Bolotin-Fukuhara M."/>
            <person name="Thierry A."/>
            <person name="Bouchier C."/>
            <person name="Caudron B."/>
            <person name="Scarpelli C."/>
            <person name="Gaillardin C."/>
            <person name="Weissenbach J."/>
            <person name="Wincker P."/>
            <person name="Souciet J.-L."/>
        </authorList>
    </citation>
    <scope>NUCLEOTIDE SEQUENCE [LARGE SCALE GENOMIC DNA]</scope>
    <source>
        <strain>ATCC 8585 / CBS 2359 / DSM 70799 / NBRC 1267 / NRRL Y-1140 / WM37</strain>
    </source>
</reference>
<name>MRH4_KLULA</name>